<accession>Q7VKE8</accession>
<dbReference type="EMBL" id="AE017143">
    <property type="protein sequence ID" value="AAP96681.1"/>
    <property type="molecule type" value="Genomic_DNA"/>
</dbReference>
<dbReference type="RefSeq" id="WP_010945707.1">
    <property type="nucleotide sequence ID" value="NC_002940.2"/>
</dbReference>
<dbReference type="SMR" id="Q7VKE8"/>
<dbReference type="STRING" id="233412.HD_1963"/>
<dbReference type="KEGG" id="hdu:HD_1963"/>
<dbReference type="eggNOG" id="COG0097">
    <property type="taxonomic scope" value="Bacteria"/>
</dbReference>
<dbReference type="HOGENOM" id="CLU_065464_1_2_6"/>
<dbReference type="OrthoDB" id="9805007at2"/>
<dbReference type="Proteomes" id="UP000001022">
    <property type="component" value="Chromosome"/>
</dbReference>
<dbReference type="GO" id="GO:0022625">
    <property type="term" value="C:cytosolic large ribosomal subunit"/>
    <property type="evidence" value="ECO:0007669"/>
    <property type="project" value="TreeGrafter"/>
</dbReference>
<dbReference type="GO" id="GO:0019843">
    <property type="term" value="F:rRNA binding"/>
    <property type="evidence" value="ECO:0007669"/>
    <property type="project" value="UniProtKB-UniRule"/>
</dbReference>
<dbReference type="GO" id="GO:0003735">
    <property type="term" value="F:structural constituent of ribosome"/>
    <property type="evidence" value="ECO:0007669"/>
    <property type="project" value="InterPro"/>
</dbReference>
<dbReference type="GO" id="GO:0002181">
    <property type="term" value="P:cytoplasmic translation"/>
    <property type="evidence" value="ECO:0007669"/>
    <property type="project" value="TreeGrafter"/>
</dbReference>
<dbReference type="FunFam" id="3.90.930.12:FF:000001">
    <property type="entry name" value="50S ribosomal protein L6"/>
    <property type="match status" value="1"/>
</dbReference>
<dbReference type="FunFam" id="3.90.930.12:FF:000002">
    <property type="entry name" value="50S ribosomal protein L6"/>
    <property type="match status" value="1"/>
</dbReference>
<dbReference type="Gene3D" id="3.90.930.12">
    <property type="entry name" value="Ribosomal protein L6, alpha-beta domain"/>
    <property type="match status" value="2"/>
</dbReference>
<dbReference type="HAMAP" id="MF_01365_B">
    <property type="entry name" value="Ribosomal_uL6_B"/>
    <property type="match status" value="1"/>
</dbReference>
<dbReference type="InterPro" id="IPR000702">
    <property type="entry name" value="Ribosomal_uL6-like"/>
</dbReference>
<dbReference type="InterPro" id="IPR036789">
    <property type="entry name" value="Ribosomal_uL6-like_a/b-dom_sf"/>
</dbReference>
<dbReference type="InterPro" id="IPR020040">
    <property type="entry name" value="Ribosomal_uL6_a/b-dom"/>
</dbReference>
<dbReference type="InterPro" id="IPR019906">
    <property type="entry name" value="Ribosomal_uL6_bac-type"/>
</dbReference>
<dbReference type="InterPro" id="IPR002358">
    <property type="entry name" value="Ribosomal_uL6_CS"/>
</dbReference>
<dbReference type="NCBIfam" id="TIGR03654">
    <property type="entry name" value="L6_bact"/>
    <property type="match status" value="1"/>
</dbReference>
<dbReference type="PANTHER" id="PTHR11655">
    <property type="entry name" value="60S/50S RIBOSOMAL PROTEIN L6/L9"/>
    <property type="match status" value="1"/>
</dbReference>
<dbReference type="PANTHER" id="PTHR11655:SF14">
    <property type="entry name" value="LARGE RIBOSOMAL SUBUNIT PROTEIN UL6M"/>
    <property type="match status" value="1"/>
</dbReference>
<dbReference type="Pfam" id="PF00347">
    <property type="entry name" value="Ribosomal_L6"/>
    <property type="match status" value="2"/>
</dbReference>
<dbReference type="PIRSF" id="PIRSF002162">
    <property type="entry name" value="Ribosomal_L6"/>
    <property type="match status" value="1"/>
</dbReference>
<dbReference type="PRINTS" id="PR00059">
    <property type="entry name" value="RIBOSOMALL6"/>
</dbReference>
<dbReference type="SUPFAM" id="SSF56053">
    <property type="entry name" value="Ribosomal protein L6"/>
    <property type="match status" value="2"/>
</dbReference>
<dbReference type="PROSITE" id="PS00525">
    <property type="entry name" value="RIBOSOMAL_L6_1"/>
    <property type="match status" value="1"/>
</dbReference>
<organism>
    <name type="scientific">Haemophilus ducreyi (strain 35000HP / ATCC 700724)</name>
    <dbReference type="NCBI Taxonomy" id="233412"/>
    <lineage>
        <taxon>Bacteria</taxon>
        <taxon>Pseudomonadati</taxon>
        <taxon>Pseudomonadota</taxon>
        <taxon>Gammaproteobacteria</taxon>
        <taxon>Pasteurellales</taxon>
        <taxon>Pasteurellaceae</taxon>
        <taxon>Haemophilus</taxon>
    </lineage>
</organism>
<evidence type="ECO:0000255" key="1">
    <source>
        <dbReference type="HAMAP-Rule" id="MF_01365"/>
    </source>
</evidence>
<evidence type="ECO:0000305" key="2"/>
<feature type="chain" id="PRO_0000265255" description="Large ribosomal subunit protein uL6">
    <location>
        <begin position="1"/>
        <end position="177"/>
    </location>
</feature>
<reference key="1">
    <citation type="submission" date="2003-06" db="EMBL/GenBank/DDBJ databases">
        <title>The complete genome sequence of Haemophilus ducreyi.</title>
        <authorList>
            <person name="Munson R.S. Jr."/>
            <person name="Ray W.C."/>
            <person name="Mahairas G."/>
            <person name="Sabo P."/>
            <person name="Mungur R."/>
            <person name="Johnson L."/>
            <person name="Nguyen D."/>
            <person name="Wang J."/>
            <person name="Forst C."/>
            <person name="Hood L."/>
        </authorList>
    </citation>
    <scope>NUCLEOTIDE SEQUENCE [LARGE SCALE GENOMIC DNA]</scope>
    <source>
        <strain>35000HP / ATCC 700724</strain>
    </source>
</reference>
<gene>
    <name evidence="1" type="primary">rplF</name>
    <name type="ordered locus">HD_1963</name>
</gene>
<name>RL6_HAEDU</name>
<comment type="function">
    <text evidence="1">This protein binds to the 23S rRNA, and is important in its secondary structure. It is located near the subunit interface in the base of the L7/L12 stalk, and near the tRNA binding site of the peptidyltransferase center.</text>
</comment>
<comment type="subunit">
    <text evidence="1">Part of the 50S ribosomal subunit.</text>
</comment>
<comment type="similarity">
    <text evidence="1">Belongs to the universal ribosomal protein uL6 family.</text>
</comment>
<keyword id="KW-1185">Reference proteome</keyword>
<keyword id="KW-0687">Ribonucleoprotein</keyword>
<keyword id="KW-0689">Ribosomal protein</keyword>
<keyword id="KW-0694">RNA-binding</keyword>
<keyword id="KW-0699">rRNA-binding</keyword>
<sequence length="177" mass="18971">MSRVAKAPVNIPAGIEVKINGQLLTVKGKNGELSREIHNAVEVNQDANALTFVPREGVANADAQAGTARALVNAMVIGVTEGFTKKLQLVGVGYRAQMKGNVVALSLGYSHPIEHTLPLGVTGECPSQTEIILKSADKQLIGQVAADIRAYRRPEPYKGKGVRYSDEVVRTKEAKKK</sequence>
<proteinExistence type="inferred from homology"/>
<protein>
    <recommendedName>
        <fullName evidence="1">Large ribosomal subunit protein uL6</fullName>
    </recommendedName>
    <alternativeName>
        <fullName evidence="2">50S ribosomal protein L6</fullName>
    </alternativeName>
</protein>